<dbReference type="EMBL" id="AC013354">
    <property type="protein sequence ID" value="AAF25983.1"/>
    <property type="status" value="ALT_SEQ"/>
    <property type="molecule type" value="Genomic_DNA"/>
</dbReference>
<dbReference type="EMBL" id="CP002684">
    <property type="status" value="NOT_ANNOTATED_CDS"/>
    <property type="molecule type" value="Genomic_DNA"/>
</dbReference>
<dbReference type="SMR" id="F4IAR2"/>
<dbReference type="FunCoup" id="F4IAR2">
    <property type="interactions" value="3"/>
</dbReference>
<dbReference type="STRING" id="3702.F4IAR2"/>
<dbReference type="PaxDb" id="3702-AT1G18410.1"/>
<dbReference type="Araport" id="AT1G18410"/>
<dbReference type="TAIR" id="AT1G18410"/>
<dbReference type="eggNOG" id="KOG0239">
    <property type="taxonomic scope" value="Eukaryota"/>
</dbReference>
<dbReference type="HOGENOM" id="CLU_001485_1_2_1"/>
<dbReference type="InParanoid" id="F4IAR2"/>
<dbReference type="PRO" id="PR:F4IAR2"/>
<dbReference type="Proteomes" id="UP000006548">
    <property type="component" value="Chromosome 1"/>
</dbReference>
<dbReference type="ExpressionAtlas" id="F4IAR2">
    <property type="expression patterns" value="baseline and differential"/>
</dbReference>
<dbReference type="GO" id="GO:0005874">
    <property type="term" value="C:microtubule"/>
    <property type="evidence" value="ECO:0007669"/>
    <property type="project" value="UniProtKB-KW"/>
</dbReference>
<dbReference type="GO" id="GO:0015630">
    <property type="term" value="C:microtubule cytoskeleton"/>
    <property type="evidence" value="ECO:0000318"/>
    <property type="project" value="GO_Central"/>
</dbReference>
<dbReference type="GO" id="GO:0005524">
    <property type="term" value="F:ATP binding"/>
    <property type="evidence" value="ECO:0007669"/>
    <property type="project" value="UniProtKB-KW"/>
</dbReference>
<dbReference type="GO" id="GO:0008017">
    <property type="term" value="F:microtubule binding"/>
    <property type="evidence" value="ECO:0000318"/>
    <property type="project" value="GO_Central"/>
</dbReference>
<dbReference type="GO" id="GO:0003777">
    <property type="term" value="F:microtubule motor activity"/>
    <property type="evidence" value="ECO:0007669"/>
    <property type="project" value="InterPro"/>
</dbReference>
<dbReference type="GO" id="GO:0007018">
    <property type="term" value="P:microtubule-based movement"/>
    <property type="evidence" value="ECO:0007669"/>
    <property type="project" value="InterPro"/>
</dbReference>
<dbReference type="GO" id="GO:0007017">
    <property type="term" value="P:microtubule-based process"/>
    <property type="evidence" value="ECO:0000318"/>
    <property type="project" value="GO_Central"/>
</dbReference>
<dbReference type="FunFam" id="3.40.850.10:FF:000044">
    <property type="entry name" value="p-loop containing nucleoside triphosphate hydrolases superfamily protein"/>
    <property type="match status" value="1"/>
</dbReference>
<dbReference type="Gene3D" id="1.20.5.170">
    <property type="match status" value="1"/>
</dbReference>
<dbReference type="Gene3D" id="3.40.850.10">
    <property type="entry name" value="Kinesin motor domain"/>
    <property type="match status" value="1"/>
</dbReference>
<dbReference type="InterPro" id="IPR027640">
    <property type="entry name" value="Kinesin-like_fam"/>
</dbReference>
<dbReference type="InterPro" id="IPR001752">
    <property type="entry name" value="Kinesin_motor_dom"/>
</dbReference>
<dbReference type="InterPro" id="IPR036961">
    <property type="entry name" value="Kinesin_motor_dom_sf"/>
</dbReference>
<dbReference type="InterPro" id="IPR027417">
    <property type="entry name" value="P-loop_NTPase"/>
</dbReference>
<dbReference type="PANTHER" id="PTHR47972:SF33">
    <property type="entry name" value="KINESIN-LIKE PROTEIN KIN-14O"/>
    <property type="match status" value="1"/>
</dbReference>
<dbReference type="PANTHER" id="PTHR47972">
    <property type="entry name" value="KINESIN-LIKE PROTEIN KLP-3"/>
    <property type="match status" value="1"/>
</dbReference>
<dbReference type="Pfam" id="PF00225">
    <property type="entry name" value="Kinesin"/>
    <property type="match status" value="1"/>
</dbReference>
<dbReference type="PRINTS" id="PR00380">
    <property type="entry name" value="KINESINHEAVY"/>
</dbReference>
<dbReference type="SMART" id="SM00129">
    <property type="entry name" value="KISc"/>
    <property type="match status" value="1"/>
</dbReference>
<dbReference type="SUPFAM" id="SSF52540">
    <property type="entry name" value="P-loop containing nucleoside triphosphate hydrolases"/>
    <property type="match status" value="1"/>
</dbReference>
<dbReference type="PROSITE" id="PS50067">
    <property type="entry name" value="KINESIN_MOTOR_2"/>
    <property type="match status" value="1"/>
</dbReference>
<proteinExistence type="inferred from homology"/>
<protein>
    <recommendedName>
        <fullName evidence="5">Kinesin-like protein KIN-14O</fullName>
    </recommendedName>
</protein>
<sequence length="1140" mass="128008">MLESEFQREHAFESATEQELTCPISDNLHESVEADDDSVQMLDNLTLNTNPAESCESEEIQTKALPSSSSGQDLVASDEDSEDVELGDTFYSCSELLQRNCCVLPYKAQKKTKENPFDFDVRTWSSPCDFPRFGEMILLSPVLNPMPFFSCCTKRAIFCSSPGSSHGGSTPRSPFSPSSPRERHNKGLADSRFQRPLPNSSALDPSSPGSMLHGGHKSHEAFQMKQGRFDLQAAKISELMKSNNLDNAPTQSLLSIVNGILDETIERKNGELPQRVACLLRKVVQEIERRISTQSEHLRTQNSVFKAREEKYQSRIKVLETLASGTSEENETEKSKLEEKKKDKEEDMVGIEKENGHYNLEISTLRRELETTKKAYEQQCLQMESKTKGATAGIEDRVKELEQMRKDASVARKALEERVRELEKMGKEADAVKMNLEEKVKELQKYKDETITVTTSIEGKNRELEQFKQETMTVTTSLEAQNRELEQAIKETMTVNTSLEAKNRELEQSKKETMTVNTSLKAKNRELEQNLVHWKSKAKEMEEKSELKNRSWSQKELSYRSFISFQCQALQELRFYSKSIKQEILKVQDKYTVEFSQLGKKLLELGDAAANYHEVLTENQKLFNELQELKGNIRVYCRVRPFLRGQGASKTVVEHIGDHGELVVLNPTKPGKDAHRKFRFNKVYSPASTQAEVFSDIKPLIRSVLDGYNVCIFAYGQTGSGKTYTMTGPDGASEEEWGVNYRALNDLFRISQSRKSNIAYEVGVQMVEIYNEQVRDLLSGILSTTQQNGLAVPDASMYPVTSTSDVLELMSIGLQNRVVSSTALNERSSRSHSIVTVHVRGKDLKTGSALYGNLHLVDLAGSERVDRSEVTGDRLKEAQHINKSLSALGDVIFSLASKSSHVPYRNSKLTQLLQSSLGGRAKTLMFVQLNPDITSYSESMSTLKFAERVSGVELGAAKSSKDGRDVRELMEQDTIARKDDEIERLHLLKDINYPQRLQKKSLGQSDDFNSEAGDSQLSIEDDSRFQHDYTRQSRHSVTDGEALASSTDAEYDDETEGSTDAPCAAEGRKPLKISDKPKPVTPRSNTTTSRPLDKLKQVTMRTTNIAKATSALLSPSSQGMKKTGSASNFLKSPKDSKRWS</sequence>
<name>KN14O_ARATH</name>
<gene>
    <name evidence="5" type="primary">KIN14O</name>
    <name evidence="6" type="ordered locus">At1g18410</name>
    <name evidence="7" type="ORF">F15H18.10</name>
</gene>
<reference key="1">
    <citation type="journal article" date="2000" name="Nature">
        <title>Sequence and analysis of chromosome 1 of the plant Arabidopsis thaliana.</title>
        <authorList>
            <person name="Theologis A."/>
            <person name="Ecker J.R."/>
            <person name="Palm C.J."/>
            <person name="Federspiel N.A."/>
            <person name="Kaul S."/>
            <person name="White O."/>
            <person name="Alonso J."/>
            <person name="Altafi H."/>
            <person name="Araujo R."/>
            <person name="Bowman C.L."/>
            <person name="Brooks S.Y."/>
            <person name="Buehler E."/>
            <person name="Chan A."/>
            <person name="Chao Q."/>
            <person name="Chen H."/>
            <person name="Cheuk R.F."/>
            <person name="Chin C.W."/>
            <person name="Chung M.K."/>
            <person name="Conn L."/>
            <person name="Conway A.B."/>
            <person name="Conway A.R."/>
            <person name="Creasy T.H."/>
            <person name="Dewar K."/>
            <person name="Dunn P."/>
            <person name="Etgu P."/>
            <person name="Feldblyum T.V."/>
            <person name="Feng J.-D."/>
            <person name="Fong B."/>
            <person name="Fujii C.Y."/>
            <person name="Gill J.E."/>
            <person name="Goldsmith A.D."/>
            <person name="Haas B."/>
            <person name="Hansen N.F."/>
            <person name="Hughes B."/>
            <person name="Huizar L."/>
            <person name="Hunter J.L."/>
            <person name="Jenkins J."/>
            <person name="Johnson-Hopson C."/>
            <person name="Khan S."/>
            <person name="Khaykin E."/>
            <person name="Kim C.J."/>
            <person name="Koo H.L."/>
            <person name="Kremenetskaia I."/>
            <person name="Kurtz D.B."/>
            <person name="Kwan A."/>
            <person name="Lam B."/>
            <person name="Langin-Hooper S."/>
            <person name="Lee A."/>
            <person name="Lee J.M."/>
            <person name="Lenz C.A."/>
            <person name="Li J.H."/>
            <person name="Li Y.-P."/>
            <person name="Lin X."/>
            <person name="Liu S.X."/>
            <person name="Liu Z.A."/>
            <person name="Luros J.S."/>
            <person name="Maiti R."/>
            <person name="Marziali A."/>
            <person name="Militscher J."/>
            <person name="Miranda M."/>
            <person name="Nguyen M."/>
            <person name="Nierman W.C."/>
            <person name="Osborne B.I."/>
            <person name="Pai G."/>
            <person name="Peterson J."/>
            <person name="Pham P.K."/>
            <person name="Rizzo M."/>
            <person name="Rooney T."/>
            <person name="Rowley D."/>
            <person name="Sakano H."/>
            <person name="Salzberg S.L."/>
            <person name="Schwartz J.R."/>
            <person name="Shinn P."/>
            <person name="Southwick A.M."/>
            <person name="Sun H."/>
            <person name="Tallon L.J."/>
            <person name="Tambunga G."/>
            <person name="Toriumi M.J."/>
            <person name="Town C.D."/>
            <person name="Utterback T."/>
            <person name="Van Aken S."/>
            <person name="Vaysberg M."/>
            <person name="Vysotskaia V.S."/>
            <person name="Walker M."/>
            <person name="Wu D."/>
            <person name="Yu G."/>
            <person name="Fraser C.M."/>
            <person name="Venter J.C."/>
            <person name="Davis R.W."/>
        </authorList>
    </citation>
    <scope>NUCLEOTIDE SEQUENCE [LARGE SCALE GENOMIC DNA]</scope>
    <source>
        <strain>cv. Columbia</strain>
    </source>
</reference>
<reference key="2">
    <citation type="journal article" date="2017" name="Plant J.">
        <title>Araport11: a complete reannotation of the Arabidopsis thaliana reference genome.</title>
        <authorList>
            <person name="Cheng C.Y."/>
            <person name="Krishnakumar V."/>
            <person name="Chan A.P."/>
            <person name="Thibaud-Nissen F."/>
            <person name="Schobel S."/>
            <person name="Town C.D."/>
        </authorList>
    </citation>
    <scope>GENOME REANNOTATION</scope>
    <source>
        <strain>cv. Columbia</strain>
    </source>
</reference>
<reference key="3">
    <citation type="journal article" date="2001" name="BMC Genomics">
        <title>Kinesins in the Arabidopsis genome: a comparative analysis among eukaryotes.</title>
        <authorList>
            <person name="Reddy A.S."/>
            <person name="Day I.S."/>
        </authorList>
    </citation>
    <scope>GENE FAMILY</scope>
</reference>
<reference key="4">
    <citation type="journal article" date="2006" name="BMC Genomics">
        <title>Comprehensive comparative analysis of kinesins in photosynthetic eukaryotes.</title>
        <authorList>
            <person name="Richardson D.N."/>
            <person name="Simmons M.P."/>
            <person name="Reddy A.S."/>
        </authorList>
    </citation>
    <scope>GENE FAMILY</scope>
    <scope>NOMENCLATURE</scope>
</reference>
<reference key="5">
    <citation type="journal article" date="2012" name="Protoplasma">
        <title>Functions of the Arabidopsis kinesin superfamily of microtubule-based motor proteins.</title>
        <authorList>
            <person name="Zhu C."/>
            <person name="Dixit R."/>
        </authorList>
    </citation>
    <scope>REVIEW</scope>
</reference>
<comment type="similarity">
    <text evidence="4">Belongs to the TRAFAC class myosin-kinesin ATPase superfamily. Kinesin family. KIN-14 subfamily.</text>
</comment>
<comment type="sequence caution" evidence="5">
    <conflict type="erroneous gene model prediction">
        <sequence resource="EMBL-CDS" id="AAF25983"/>
    </conflict>
</comment>
<feature type="chain" id="PRO_0000438048" description="Kinesin-like protein KIN-14O">
    <location>
        <begin position="1"/>
        <end position="1140"/>
    </location>
</feature>
<feature type="domain" description="Kinesin motor" evidence="2">
    <location>
        <begin position="632"/>
        <end position="952"/>
    </location>
</feature>
<feature type="region of interest" description="Disordered" evidence="3">
    <location>
        <begin position="1"/>
        <end position="37"/>
    </location>
</feature>
<feature type="region of interest" description="Disordered" evidence="3">
    <location>
        <begin position="50"/>
        <end position="81"/>
    </location>
</feature>
<feature type="region of interest" description="Disordered" evidence="3">
    <location>
        <begin position="161"/>
        <end position="217"/>
    </location>
</feature>
<feature type="region of interest" description="Disordered" evidence="3">
    <location>
        <begin position="323"/>
        <end position="347"/>
    </location>
</feature>
<feature type="region of interest" description="Disordered" evidence="3">
    <location>
        <begin position="1002"/>
        <end position="1021"/>
    </location>
</feature>
<feature type="region of interest" description="Disordered" evidence="3">
    <location>
        <begin position="1028"/>
        <end position="1140"/>
    </location>
</feature>
<feature type="coiled-coil region" evidence="1">
    <location>
        <begin position="327"/>
        <end position="546"/>
    </location>
</feature>
<feature type="compositionally biased region" description="Basic and acidic residues" evidence="3">
    <location>
        <begin position="1"/>
        <end position="12"/>
    </location>
</feature>
<feature type="compositionally biased region" description="Low complexity" evidence="3">
    <location>
        <begin position="161"/>
        <end position="179"/>
    </location>
</feature>
<feature type="compositionally biased region" description="Basic and acidic residues" evidence="3">
    <location>
        <begin position="180"/>
        <end position="193"/>
    </location>
</feature>
<feature type="compositionally biased region" description="Polar residues" evidence="3">
    <location>
        <begin position="197"/>
        <end position="209"/>
    </location>
</feature>
<feature type="compositionally biased region" description="Basic and acidic residues" evidence="3">
    <location>
        <begin position="332"/>
        <end position="347"/>
    </location>
</feature>
<feature type="compositionally biased region" description="Polar residues" evidence="3">
    <location>
        <begin position="1002"/>
        <end position="1018"/>
    </location>
</feature>
<feature type="compositionally biased region" description="Basic and acidic residues" evidence="3">
    <location>
        <begin position="1066"/>
        <end position="1078"/>
    </location>
</feature>
<feature type="compositionally biased region" description="Polar residues" evidence="3">
    <location>
        <begin position="1099"/>
        <end position="1130"/>
    </location>
</feature>
<feature type="binding site" evidence="2">
    <location>
        <begin position="716"/>
        <end position="723"/>
    </location>
    <ligand>
        <name>ATP</name>
        <dbReference type="ChEBI" id="CHEBI:30616"/>
    </ligand>
</feature>
<evidence type="ECO:0000255" key="1"/>
<evidence type="ECO:0000255" key="2">
    <source>
        <dbReference type="PROSITE-ProRule" id="PRU00283"/>
    </source>
</evidence>
<evidence type="ECO:0000256" key="3">
    <source>
        <dbReference type="SAM" id="MobiDB-lite"/>
    </source>
</evidence>
<evidence type="ECO:0000303" key="4">
    <source>
    </source>
</evidence>
<evidence type="ECO:0000305" key="5"/>
<evidence type="ECO:0000312" key="6">
    <source>
        <dbReference type="Araport" id="AT1G18410"/>
    </source>
</evidence>
<evidence type="ECO:0000312" key="7">
    <source>
        <dbReference type="EMBL" id="AAF25983.1"/>
    </source>
</evidence>
<organism>
    <name type="scientific">Arabidopsis thaliana</name>
    <name type="common">Mouse-ear cress</name>
    <dbReference type="NCBI Taxonomy" id="3702"/>
    <lineage>
        <taxon>Eukaryota</taxon>
        <taxon>Viridiplantae</taxon>
        <taxon>Streptophyta</taxon>
        <taxon>Embryophyta</taxon>
        <taxon>Tracheophyta</taxon>
        <taxon>Spermatophyta</taxon>
        <taxon>Magnoliopsida</taxon>
        <taxon>eudicotyledons</taxon>
        <taxon>Gunneridae</taxon>
        <taxon>Pentapetalae</taxon>
        <taxon>rosids</taxon>
        <taxon>malvids</taxon>
        <taxon>Brassicales</taxon>
        <taxon>Brassicaceae</taxon>
        <taxon>Camelineae</taxon>
        <taxon>Arabidopsis</taxon>
    </lineage>
</organism>
<accession>F4IAR2</accession>
<accession>Q9LPQ7</accession>
<keyword id="KW-0067">ATP-binding</keyword>
<keyword id="KW-0175">Coiled coil</keyword>
<keyword id="KW-0493">Microtubule</keyword>
<keyword id="KW-0505">Motor protein</keyword>
<keyword id="KW-0547">Nucleotide-binding</keyword>
<keyword id="KW-1185">Reference proteome</keyword>